<sequence>MLSKDKLDRINVLSKKSKEEGLTTEEKAEQKKLREEYLKNVRSSFKNQLSTVTVLDPEGKDVTPQKLRDYQDRNKKH</sequence>
<reference key="1">
    <citation type="journal article" date="2002" name="Nucleic Acids Res.">
        <title>Genome sequence of Oceanobacillus iheyensis isolated from the Iheya Ridge and its unexpected adaptive capabilities to extreme environments.</title>
        <authorList>
            <person name="Takami H."/>
            <person name="Takaki Y."/>
            <person name="Uchiyama I."/>
        </authorList>
    </citation>
    <scope>NUCLEOTIDE SEQUENCE [LARGE SCALE GENOMIC DNA]</scope>
    <source>
        <strain>DSM 14371 / CIP 107618 / JCM 11309 / KCTC 3954 / HTE831</strain>
    </source>
</reference>
<dbReference type="EMBL" id="BA000028">
    <property type="protein sequence ID" value="BAC13627.1"/>
    <property type="molecule type" value="Genomic_DNA"/>
</dbReference>
<dbReference type="RefSeq" id="WP_011066072.1">
    <property type="nucleotide sequence ID" value="NC_004193.1"/>
</dbReference>
<dbReference type="SMR" id="Q8EQM4"/>
<dbReference type="STRING" id="221109.gene:10733911"/>
<dbReference type="KEGG" id="oih:OB1671"/>
<dbReference type="eggNOG" id="COG4224">
    <property type="taxonomic scope" value="Bacteria"/>
</dbReference>
<dbReference type="HOGENOM" id="CLU_173137_0_2_9"/>
<dbReference type="OrthoDB" id="390105at2"/>
<dbReference type="PhylomeDB" id="Q8EQM4"/>
<dbReference type="Proteomes" id="UP000000822">
    <property type="component" value="Chromosome"/>
</dbReference>
<dbReference type="GO" id="GO:0005737">
    <property type="term" value="C:cytoplasm"/>
    <property type="evidence" value="ECO:0007669"/>
    <property type="project" value="UniProtKB-SubCell"/>
</dbReference>
<dbReference type="Gene3D" id="1.10.287.540">
    <property type="entry name" value="Helix hairpin bin"/>
    <property type="match status" value="1"/>
</dbReference>
<dbReference type="HAMAP" id="MF_01103">
    <property type="entry name" value="UPF0291"/>
    <property type="match status" value="1"/>
</dbReference>
<dbReference type="InterPro" id="IPR009242">
    <property type="entry name" value="DUF896"/>
</dbReference>
<dbReference type="PANTHER" id="PTHR37300">
    <property type="entry name" value="UPF0291 PROTEIN CBO2609/CLC_2481"/>
    <property type="match status" value="1"/>
</dbReference>
<dbReference type="PANTHER" id="PTHR37300:SF1">
    <property type="entry name" value="UPF0291 PROTEIN YNZC"/>
    <property type="match status" value="1"/>
</dbReference>
<dbReference type="Pfam" id="PF05979">
    <property type="entry name" value="DUF896"/>
    <property type="match status" value="1"/>
</dbReference>
<dbReference type="SUPFAM" id="SSF158221">
    <property type="entry name" value="YnzC-like"/>
    <property type="match status" value="1"/>
</dbReference>
<protein>
    <recommendedName>
        <fullName evidence="1">UPF0291 protein OB1671</fullName>
    </recommendedName>
</protein>
<keyword id="KW-0963">Cytoplasm</keyword>
<keyword id="KW-1185">Reference proteome</keyword>
<name>Y1671_OCEIH</name>
<feature type="chain" id="PRO_0000094982" description="UPF0291 protein OB1671">
    <location>
        <begin position="1"/>
        <end position="77"/>
    </location>
</feature>
<feature type="region of interest" description="Disordered" evidence="2">
    <location>
        <begin position="56"/>
        <end position="77"/>
    </location>
</feature>
<feature type="compositionally biased region" description="Basic and acidic residues" evidence="2">
    <location>
        <begin position="57"/>
        <end position="77"/>
    </location>
</feature>
<evidence type="ECO:0000255" key="1">
    <source>
        <dbReference type="HAMAP-Rule" id="MF_01103"/>
    </source>
</evidence>
<evidence type="ECO:0000256" key="2">
    <source>
        <dbReference type="SAM" id="MobiDB-lite"/>
    </source>
</evidence>
<gene>
    <name type="ordered locus">OB1671</name>
</gene>
<organism>
    <name type="scientific">Oceanobacillus iheyensis (strain DSM 14371 / CIP 107618 / JCM 11309 / KCTC 3954 / HTE831)</name>
    <dbReference type="NCBI Taxonomy" id="221109"/>
    <lineage>
        <taxon>Bacteria</taxon>
        <taxon>Bacillati</taxon>
        <taxon>Bacillota</taxon>
        <taxon>Bacilli</taxon>
        <taxon>Bacillales</taxon>
        <taxon>Bacillaceae</taxon>
        <taxon>Oceanobacillus</taxon>
    </lineage>
</organism>
<accession>Q8EQM4</accession>
<comment type="subcellular location">
    <subcellularLocation>
        <location evidence="1">Cytoplasm</location>
    </subcellularLocation>
</comment>
<comment type="similarity">
    <text evidence="1">Belongs to the UPF0291 family.</text>
</comment>
<proteinExistence type="inferred from homology"/>